<gene>
    <name evidence="1" type="primary">lplT</name>
    <name type="ordered locus">UTI89_C3239</name>
</gene>
<keyword id="KW-0997">Cell inner membrane</keyword>
<keyword id="KW-1003">Cell membrane</keyword>
<keyword id="KW-0445">Lipid transport</keyword>
<keyword id="KW-0472">Membrane</keyword>
<keyword id="KW-0812">Transmembrane</keyword>
<keyword id="KW-1133">Transmembrane helix</keyword>
<keyword id="KW-0813">Transport</keyword>
<name>LPLT_ECOUT</name>
<sequence length="397" mass="41639">MSESVHTNTSLWSKGMKAVIVAQFLSAFGDNALLFATLALLKAQFYPEWSQPILQMVFVGAYILFAPFVGQVADSFAKGRVMMFANGLKLLGAASICFGINPFLGYTLVGVGAAAYSPAKYGILGELTTGSKLVKANGLMEASTIAAILLGSVAGGVLADWHILVALVACALAYGGAVVANIYIPKLAAARPGQSWNLISMTRSFLNACTSLWRNGETRFSLVGTSLFWGAGVTLRFLLVLWVPVALGITDNATPTYLNAMVAIGIVVGAGAAAKLVTLETVSRCMPAGILIGVVVLIFSLQHELLPAYALLMLIGVLGGFFVVPLNALLQERGKKSVGAGNAIAVQNLGENSAMLLMLGIYSLAVMVGIPVVPIGIGFGALFALAITALWIWQRRH</sequence>
<feature type="chain" id="PRO_0000309824" description="Lysophospholipid transporter LplT">
    <location>
        <begin position="1"/>
        <end position="397"/>
    </location>
</feature>
<feature type="topological domain" description="Periplasmic" evidence="1">
    <location>
        <begin position="1"/>
        <end position="17"/>
    </location>
</feature>
<feature type="transmembrane region" description="Helical" evidence="1">
    <location>
        <begin position="18"/>
        <end position="38"/>
    </location>
</feature>
<feature type="topological domain" description="Cytoplasmic" evidence="1">
    <location>
        <begin position="39"/>
        <end position="52"/>
    </location>
</feature>
<feature type="transmembrane region" description="Helical" evidence="1">
    <location>
        <begin position="53"/>
        <end position="73"/>
    </location>
</feature>
<feature type="topological domain" description="Periplasmic" evidence="1">
    <location>
        <begin position="74"/>
        <end position="90"/>
    </location>
</feature>
<feature type="transmembrane region" description="Helical" evidence="1">
    <location>
        <begin position="91"/>
        <end position="111"/>
    </location>
</feature>
<feature type="topological domain" description="Cytoplasmic" evidence="1">
    <location>
        <begin position="112"/>
        <end position="144"/>
    </location>
</feature>
<feature type="transmembrane region" description="Helical" evidence="1">
    <location>
        <begin position="145"/>
        <end position="165"/>
    </location>
</feature>
<feature type="topological domain" description="Periplasmic" evidence="1">
    <location>
        <position position="166"/>
    </location>
</feature>
<feature type="transmembrane region" description="Helical" evidence="1">
    <location>
        <begin position="167"/>
        <end position="187"/>
    </location>
</feature>
<feature type="topological domain" description="Cytoplasmic" evidence="1">
    <location>
        <begin position="188"/>
        <end position="226"/>
    </location>
</feature>
<feature type="transmembrane region" description="Helical" evidence="1">
    <location>
        <begin position="227"/>
        <end position="247"/>
    </location>
</feature>
<feature type="topological domain" description="Periplasmic" evidence="1">
    <location>
        <begin position="248"/>
        <end position="256"/>
    </location>
</feature>
<feature type="transmembrane region" description="Helical" evidence="1">
    <location>
        <begin position="257"/>
        <end position="277"/>
    </location>
</feature>
<feature type="topological domain" description="Cytoplasmic" evidence="1">
    <location>
        <begin position="278"/>
        <end position="280"/>
    </location>
</feature>
<feature type="transmembrane region" description="Helical" evidence="1">
    <location>
        <begin position="281"/>
        <end position="301"/>
    </location>
</feature>
<feature type="topological domain" description="Periplasmic" evidence="1">
    <location>
        <begin position="302"/>
        <end position="304"/>
    </location>
</feature>
<feature type="transmembrane region" description="Helical" evidence="1">
    <location>
        <begin position="305"/>
        <end position="325"/>
    </location>
</feature>
<feature type="topological domain" description="Cytoplasmic" evidence="1">
    <location>
        <begin position="326"/>
        <end position="343"/>
    </location>
</feature>
<feature type="transmembrane region" description="Helical" evidence="1">
    <location>
        <begin position="344"/>
        <end position="364"/>
    </location>
</feature>
<feature type="topological domain" description="Periplasmic" evidence="1">
    <location>
        <begin position="365"/>
        <end position="366"/>
    </location>
</feature>
<feature type="transmembrane region" description="Helical" evidence="1">
    <location>
        <begin position="367"/>
        <end position="387"/>
    </location>
</feature>
<feature type="topological domain" description="Cytoplasmic" evidence="1">
    <location>
        <begin position="388"/>
        <end position="397"/>
    </location>
</feature>
<organism>
    <name type="scientific">Escherichia coli (strain UTI89 / UPEC)</name>
    <dbReference type="NCBI Taxonomy" id="364106"/>
    <lineage>
        <taxon>Bacteria</taxon>
        <taxon>Pseudomonadati</taxon>
        <taxon>Pseudomonadota</taxon>
        <taxon>Gammaproteobacteria</taxon>
        <taxon>Enterobacterales</taxon>
        <taxon>Enterobacteriaceae</taxon>
        <taxon>Escherichia</taxon>
    </lineage>
</organism>
<evidence type="ECO:0000255" key="1">
    <source>
        <dbReference type="HAMAP-Rule" id="MF_01585"/>
    </source>
</evidence>
<dbReference type="EMBL" id="CP000243">
    <property type="protein sequence ID" value="ABE08688.1"/>
    <property type="molecule type" value="Genomic_DNA"/>
</dbReference>
<dbReference type="RefSeq" id="WP_000004601.1">
    <property type="nucleotide sequence ID" value="NZ_CP064825.1"/>
</dbReference>
<dbReference type="SMR" id="Q1R7H6"/>
<dbReference type="KEGG" id="eci:UTI89_C3239"/>
<dbReference type="HOGENOM" id="CLU_047399_0_0_6"/>
<dbReference type="Proteomes" id="UP000001952">
    <property type="component" value="Chromosome"/>
</dbReference>
<dbReference type="GO" id="GO:0005886">
    <property type="term" value="C:plasma membrane"/>
    <property type="evidence" value="ECO:0007669"/>
    <property type="project" value="UniProtKB-SubCell"/>
</dbReference>
<dbReference type="GO" id="GO:0051978">
    <property type="term" value="F:lysophospholipid:sodium symporter activity"/>
    <property type="evidence" value="ECO:0007669"/>
    <property type="project" value="InterPro"/>
</dbReference>
<dbReference type="CDD" id="cd06173">
    <property type="entry name" value="MFS_MefA_like"/>
    <property type="match status" value="1"/>
</dbReference>
<dbReference type="FunFam" id="1.20.1250.20:FF:000091">
    <property type="entry name" value="Lysophospholipid transporter LplT"/>
    <property type="match status" value="1"/>
</dbReference>
<dbReference type="Gene3D" id="1.20.1250.20">
    <property type="entry name" value="MFS general substrate transporter like domains"/>
    <property type="match status" value="1"/>
</dbReference>
<dbReference type="HAMAP" id="MF_01585">
    <property type="entry name" value="MFS_LplT"/>
    <property type="match status" value="1"/>
</dbReference>
<dbReference type="InterPro" id="IPR023727">
    <property type="entry name" value="LysoPLipid__transptr_LplT"/>
</dbReference>
<dbReference type="InterPro" id="IPR011701">
    <property type="entry name" value="MFS"/>
</dbReference>
<dbReference type="InterPro" id="IPR036259">
    <property type="entry name" value="MFS_trans_sf"/>
</dbReference>
<dbReference type="NCBIfam" id="NF008397">
    <property type="entry name" value="PRK11195.1"/>
    <property type="match status" value="1"/>
</dbReference>
<dbReference type="PANTHER" id="PTHR43266">
    <property type="entry name" value="MACROLIDE-EFFLUX PROTEIN"/>
    <property type="match status" value="1"/>
</dbReference>
<dbReference type="PANTHER" id="PTHR43266:SF2">
    <property type="entry name" value="MAJOR FACILITATOR SUPERFAMILY (MFS) PROFILE DOMAIN-CONTAINING PROTEIN"/>
    <property type="match status" value="1"/>
</dbReference>
<dbReference type="Pfam" id="PF07690">
    <property type="entry name" value="MFS_1"/>
    <property type="match status" value="1"/>
</dbReference>
<dbReference type="SUPFAM" id="SSF103473">
    <property type="entry name" value="MFS general substrate transporter"/>
    <property type="match status" value="1"/>
</dbReference>
<reference key="1">
    <citation type="journal article" date="2006" name="Proc. Natl. Acad. Sci. U.S.A.">
        <title>Identification of genes subject to positive selection in uropathogenic strains of Escherichia coli: a comparative genomics approach.</title>
        <authorList>
            <person name="Chen S.L."/>
            <person name="Hung C.-S."/>
            <person name="Xu J."/>
            <person name="Reigstad C.S."/>
            <person name="Magrini V."/>
            <person name="Sabo A."/>
            <person name="Blasiar D."/>
            <person name="Bieri T."/>
            <person name="Meyer R.R."/>
            <person name="Ozersky P."/>
            <person name="Armstrong J.R."/>
            <person name="Fulton R.S."/>
            <person name="Latreille J.P."/>
            <person name="Spieth J."/>
            <person name="Hooton T.M."/>
            <person name="Mardis E.R."/>
            <person name="Hultgren S.J."/>
            <person name="Gordon J.I."/>
        </authorList>
    </citation>
    <scope>NUCLEOTIDE SEQUENCE [LARGE SCALE GENOMIC DNA]</scope>
    <source>
        <strain>UTI89 / UPEC</strain>
    </source>
</reference>
<accession>Q1R7H6</accession>
<proteinExistence type="inferred from homology"/>
<comment type="function">
    <text evidence="1">Catalyzes the facilitated diffusion of 2-acyl-glycero-3-phosphoethanolamine (2-acyl-GPE) into the cell.</text>
</comment>
<comment type="subcellular location">
    <subcellularLocation>
        <location evidence="1">Cell inner membrane</location>
        <topology evidence="1">Multi-pass membrane protein</topology>
    </subcellularLocation>
</comment>
<comment type="similarity">
    <text evidence="1">Belongs to the major facilitator superfamily. LplT (TC 2.A.1.42) family.</text>
</comment>
<protein>
    <recommendedName>
        <fullName evidence="1">Lysophospholipid transporter LplT</fullName>
    </recommendedName>
</protein>